<organism>
    <name type="scientific">Homo sapiens</name>
    <name type="common">Human</name>
    <dbReference type="NCBI Taxonomy" id="9606"/>
    <lineage>
        <taxon>Eukaryota</taxon>
        <taxon>Metazoa</taxon>
        <taxon>Chordata</taxon>
        <taxon>Craniata</taxon>
        <taxon>Vertebrata</taxon>
        <taxon>Euteleostomi</taxon>
        <taxon>Mammalia</taxon>
        <taxon>Eutheria</taxon>
        <taxon>Euarchontoglires</taxon>
        <taxon>Primates</taxon>
        <taxon>Haplorrhini</taxon>
        <taxon>Catarrhini</taxon>
        <taxon>Hominidae</taxon>
        <taxon>Homo</taxon>
    </lineage>
</organism>
<feature type="signal peptide" evidence="2">
    <location>
        <begin position="1"/>
        <end position="26"/>
    </location>
</feature>
<feature type="chain" id="PRO_0000208190" description="1-acyl-sn-glycerol-3-phosphate acyltransferase alpha">
    <location>
        <begin position="27"/>
        <end position="283"/>
    </location>
</feature>
<feature type="topological domain" description="Lumenal" evidence="8">
    <location>
        <begin position="27"/>
        <end position="37"/>
    </location>
</feature>
<feature type="transmembrane region" description="Helical" evidence="2">
    <location>
        <begin position="38"/>
        <end position="58"/>
    </location>
</feature>
<feature type="topological domain" description="Cytoplasmic" evidence="8">
    <location>
        <begin position="59"/>
        <end position="127"/>
    </location>
</feature>
<feature type="transmembrane region" description="Helical" evidence="2">
    <location>
        <begin position="128"/>
        <end position="148"/>
    </location>
</feature>
<feature type="topological domain" description="Lumenal" evidence="8">
    <location>
        <begin position="149"/>
        <end position="283"/>
    </location>
</feature>
<feature type="short sequence motif" description="HXXXXD motif" evidence="1">
    <location>
        <begin position="104"/>
        <end position="109"/>
    </location>
</feature>
<feature type="short sequence motif" description="EGTR motif" evidence="7">
    <location>
        <begin position="178"/>
        <end position="181"/>
    </location>
</feature>
<feature type="sequence variant" id="VAR_050593" description="In dbSNP:rs11964847.">
    <original>P</original>
    <variation>S</variation>
    <location>
        <position position="30"/>
    </location>
</feature>
<accession>Q99943</accession>
<accession>A2BFI5</accession>
<accession>Q5BL03</accession>
<dbReference type="EC" id="2.3.1.51" evidence="3 4"/>
<dbReference type="EMBL" id="U56417">
    <property type="protein sequence ID" value="AAB58775.1"/>
    <property type="molecule type" value="mRNA"/>
</dbReference>
<dbReference type="EMBL" id="U75971">
    <property type="protein sequence ID" value="AAB96378.1"/>
    <property type="molecule type" value="mRNA"/>
</dbReference>
<dbReference type="EMBL" id="Y09565">
    <property type="protein sequence ID" value="CAA70758.1"/>
    <property type="molecule type" value="mRNA"/>
</dbReference>
<dbReference type="EMBL" id="U89336">
    <property type="protein sequence ID" value="AAB47493.1"/>
    <property type="status" value="ALT_INIT"/>
    <property type="molecule type" value="Genomic_DNA"/>
</dbReference>
<dbReference type="EMBL" id="AL662884">
    <property type="status" value="NOT_ANNOTATED_CDS"/>
    <property type="molecule type" value="Genomic_DNA"/>
</dbReference>
<dbReference type="EMBL" id="AL662828">
    <property type="status" value="NOT_ANNOTATED_CDS"/>
    <property type="molecule type" value="Genomic_DNA"/>
</dbReference>
<dbReference type="EMBL" id="AL845464">
    <property type="status" value="NOT_ANNOTATED_CDS"/>
    <property type="molecule type" value="Genomic_DNA"/>
</dbReference>
<dbReference type="EMBL" id="BX284686">
    <property type="status" value="NOT_ANNOTATED_CDS"/>
    <property type="molecule type" value="Genomic_DNA"/>
</dbReference>
<dbReference type="EMBL" id="BX927239">
    <property type="status" value="NOT_ANNOTATED_CDS"/>
    <property type="molecule type" value="Genomic_DNA"/>
</dbReference>
<dbReference type="EMBL" id="CR933878">
    <property type="status" value="NOT_ANNOTATED_CDS"/>
    <property type="molecule type" value="Genomic_DNA"/>
</dbReference>
<dbReference type="EMBL" id="CR812478">
    <property type="status" value="NOT_ANNOTATED_CDS"/>
    <property type="molecule type" value="Genomic_DNA"/>
</dbReference>
<dbReference type="EMBL" id="CH471081">
    <property type="protein sequence ID" value="EAX03600.1"/>
    <property type="molecule type" value="Genomic_DNA"/>
</dbReference>
<dbReference type="EMBL" id="BC002402">
    <property type="protein sequence ID" value="AAH02402.1"/>
    <property type="molecule type" value="mRNA"/>
</dbReference>
<dbReference type="EMBL" id="BC003007">
    <property type="protein sequence ID" value="AAH03007.1"/>
    <property type="molecule type" value="mRNA"/>
</dbReference>
<dbReference type="EMBL" id="BC004310">
    <property type="protein sequence ID" value="AAH04310.1"/>
    <property type="molecule type" value="mRNA"/>
</dbReference>
<dbReference type="EMBL" id="BC090849">
    <property type="protein sequence ID" value="AAH90849.1"/>
    <property type="molecule type" value="mRNA"/>
</dbReference>
<dbReference type="CCDS" id="CCDS4744.1"/>
<dbReference type="RefSeq" id="NP_001358367.1">
    <property type="nucleotide sequence ID" value="NM_001371438.1"/>
</dbReference>
<dbReference type="RefSeq" id="NP_001358368.1">
    <property type="nucleotide sequence ID" value="NM_001371439.1"/>
</dbReference>
<dbReference type="RefSeq" id="NP_006402.1">
    <property type="nucleotide sequence ID" value="NM_006411.4"/>
</dbReference>
<dbReference type="RefSeq" id="NP_116130.2">
    <property type="nucleotide sequence ID" value="NM_032741.4"/>
</dbReference>
<dbReference type="RefSeq" id="XP_005248863.1">
    <property type="nucleotide sequence ID" value="XM_005248806.2"/>
</dbReference>
<dbReference type="RefSeq" id="XP_011512536.1">
    <property type="nucleotide sequence ID" value="XM_011514234.1"/>
</dbReference>
<dbReference type="SMR" id="Q99943"/>
<dbReference type="BioGRID" id="115805">
    <property type="interactions" value="311"/>
</dbReference>
<dbReference type="FunCoup" id="Q99943">
    <property type="interactions" value="1125"/>
</dbReference>
<dbReference type="IntAct" id="Q99943">
    <property type="interactions" value="211"/>
</dbReference>
<dbReference type="MINT" id="Q99943"/>
<dbReference type="STRING" id="9606.ENSP00000378877"/>
<dbReference type="ChEMBL" id="CHEMBL3583"/>
<dbReference type="SwissLipids" id="SLP:000000095"/>
<dbReference type="GlyGen" id="Q99943">
    <property type="glycosylation" value="3 sites, 1 N-linked glycan (1 site)"/>
</dbReference>
<dbReference type="iPTMnet" id="Q99943"/>
<dbReference type="PhosphoSitePlus" id="Q99943"/>
<dbReference type="SwissPalm" id="Q99943"/>
<dbReference type="BioMuta" id="AGPAT1"/>
<dbReference type="DMDM" id="3914372"/>
<dbReference type="jPOST" id="Q99943"/>
<dbReference type="MassIVE" id="Q99943"/>
<dbReference type="PaxDb" id="9606-ENSP00000378877"/>
<dbReference type="PeptideAtlas" id="Q99943"/>
<dbReference type="ProteomicsDB" id="78534"/>
<dbReference type="Pumba" id="Q99943"/>
<dbReference type="Antibodypedia" id="28453">
    <property type="antibodies" value="138 antibodies from 21 providers"/>
</dbReference>
<dbReference type="DNASU" id="10554"/>
<dbReference type="Ensembl" id="ENST00000336984.6">
    <property type="protein sequence ID" value="ENSP00000337463.6"/>
    <property type="gene ID" value="ENSG00000204310.13"/>
</dbReference>
<dbReference type="Ensembl" id="ENST00000375104.6">
    <property type="protein sequence ID" value="ENSP00000364245.2"/>
    <property type="gene ID" value="ENSG00000204310.13"/>
</dbReference>
<dbReference type="Ensembl" id="ENST00000375107.8">
    <property type="protein sequence ID" value="ENSP00000364248.3"/>
    <property type="gene ID" value="ENSG00000204310.13"/>
</dbReference>
<dbReference type="Ensembl" id="ENST00000383294.4">
    <property type="protein sequence ID" value="ENSP00000372782.4"/>
    <property type="gene ID" value="ENSG00000206324.11"/>
</dbReference>
<dbReference type="Ensembl" id="ENST00000395496.5">
    <property type="protein sequence ID" value="ENSP00000378874.1"/>
    <property type="gene ID" value="ENSG00000204310.13"/>
</dbReference>
<dbReference type="Ensembl" id="ENST00000395497.5">
    <property type="protein sequence ID" value="ENSP00000378875.1"/>
    <property type="gene ID" value="ENSG00000204310.13"/>
</dbReference>
<dbReference type="Ensembl" id="ENST00000395499.5">
    <property type="protein sequence ID" value="ENSP00000378877.1"/>
    <property type="gene ID" value="ENSG00000204310.13"/>
</dbReference>
<dbReference type="Ensembl" id="ENST00000399825.5">
    <property type="protein sequence ID" value="ENSP00000382721.1"/>
    <property type="gene ID" value="ENSG00000206324.11"/>
</dbReference>
<dbReference type="Ensembl" id="ENST00000399827.5">
    <property type="protein sequence ID" value="ENSP00000382723.1"/>
    <property type="gene ID" value="ENSG00000206324.11"/>
</dbReference>
<dbReference type="Ensembl" id="ENST00000399829.5">
    <property type="protein sequence ID" value="ENSP00000382725.1"/>
    <property type="gene ID" value="ENSG00000206324.11"/>
</dbReference>
<dbReference type="Ensembl" id="ENST00000399830.5">
    <property type="protein sequence ID" value="ENSP00000382726.1"/>
    <property type="gene ID" value="ENSG00000206324.11"/>
</dbReference>
<dbReference type="Ensembl" id="ENST00000399833.7">
    <property type="protein sequence ID" value="ENSP00000382728.3"/>
    <property type="gene ID" value="ENSG00000206324.11"/>
</dbReference>
<dbReference type="Ensembl" id="ENST00000414520.5">
    <property type="protein sequence ID" value="ENSP00000406615.1"/>
    <property type="gene ID" value="ENSG00000227642.9"/>
</dbReference>
<dbReference type="Ensembl" id="ENST00000414933.6">
    <property type="protein sequence ID" value="ENSP00000388870.2"/>
    <property type="gene ID" value="ENSG00000227642.9"/>
</dbReference>
<dbReference type="Ensembl" id="ENST00000415173.5">
    <property type="protein sequence ID" value="ENSP00000412805.1"/>
    <property type="gene ID" value="ENSG00000228892.9"/>
</dbReference>
<dbReference type="Ensembl" id="ENST00000416363.6">
    <property type="protein sequence ID" value="ENSP00000407189.2"/>
    <property type="gene ID" value="ENSG00000236873.9"/>
</dbReference>
<dbReference type="Ensembl" id="ENST00000417388.2">
    <property type="protein sequence ID" value="ENSP00000415015.2"/>
    <property type="gene ID" value="ENSG00000228892.9"/>
</dbReference>
<dbReference type="Ensembl" id="ENST00000424030.5">
    <property type="protein sequence ID" value="ENSP00000397765.1"/>
    <property type="gene ID" value="ENSG00000236873.9"/>
</dbReference>
<dbReference type="Ensembl" id="ENST00000425204.2">
    <property type="protein sequence ID" value="ENSP00000388253.2"/>
    <property type="gene ID" value="ENSG00000226467.9"/>
</dbReference>
<dbReference type="Ensembl" id="ENST00000425572.5">
    <property type="protein sequence ID" value="ENSP00000394919.1"/>
    <property type="gene ID" value="ENSG00000235758.9"/>
</dbReference>
<dbReference type="Ensembl" id="ENST00000427763.5">
    <property type="protein sequence ID" value="ENSP00000401410.1"/>
    <property type="gene ID" value="ENSG00000226467.9"/>
</dbReference>
<dbReference type="Ensembl" id="ENST00000430226.5">
    <property type="protein sequence ID" value="ENSP00000412304.1"/>
    <property type="gene ID" value="ENSG00000235758.9"/>
</dbReference>
<dbReference type="Ensembl" id="ENST00000430777.2">
    <property type="protein sequence ID" value="ENSP00000392820.2"/>
    <property type="gene ID" value="ENSG00000236873.9"/>
</dbReference>
<dbReference type="Ensembl" id="ENST00000433376.6">
    <property type="protein sequence ID" value="ENSP00000387810.2"/>
    <property type="gene ID" value="ENSG00000228892.9"/>
</dbReference>
<dbReference type="Ensembl" id="ENST00000433896.5">
    <property type="protein sequence ID" value="ENSP00000408842.1"/>
    <property type="gene ID" value="ENSG00000236873.9"/>
</dbReference>
<dbReference type="Ensembl" id="ENST00000434614.5">
    <property type="protein sequence ID" value="ENSP00000401287.1"/>
    <property type="gene ID" value="ENSG00000235758.9"/>
</dbReference>
<dbReference type="Ensembl" id="ENST00000436149.5">
    <property type="protein sequence ID" value="ENSP00000388090.1"/>
    <property type="gene ID" value="ENSG00000235758.9"/>
</dbReference>
<dbReference type="Ensembl" id="ENST00000439774.5">
    <property type="protein sequence ID" value="ENSP00000398016.1"/>
    <property type="gene ID" value="ENSG00000236873.9"/>
</dbReference>
<dbReference type="Ensembl" id="ENST00000440840.5">
    <property type="protein sequence ID" value="ENSP00000395863.1"/>
    <property type="gene ID" value="ENSG00000236873.9"/>
</dbReference>
<dbReference type="Ensembl" id="ENST00000444369.5">
    <property type="protein sequence ID" value="ENSP00000408032.1"/>
    <property type="gene ID" value="ENSG00000227642.9"/>
</dbReference>
<dbReference type="Ensembl" id="ENST00000446323.5">
    <property type="protein sequence ID" value="ENSP00000392083.1"/>
    <property type="gene ID" value="ENSG00000226467.9"/>
</dbReference>
<dbReference type="Ensembl" id="ENST00000446463.6">
    <property type="protein sequence ID" value="ENSP00000405864.2"/>
    <property type="gene ID" value="ENSG00000226467.9"/>
</dbReference>
<dbReference type="Ensembl" id="ENST00000448196.2">
    <property type="protein sequence ID" value="ENSP00000404106.2"/>
    <property type="gene ID" value="ENSG00000235758.9"/>
</dbReference>
<dbReference type="Ensembl" id="ENST00000449776.5">
    <property type="protein sequence ID" value="ENSP00000410831.1"/>
    <property type="gene ID" value="ENSG00000226467.9"/>
</dbReference>
<dbReference type="Ensembl" id="ENST00000451833.5">
    <property type="protein sequence ID" value="ENSP00000406582.1"/>
    <property type="gene ID" value="ENSG00000228892.9"/>
</dbReference>
<dbReference type="Ensembl" id="ENST00000452393.5">
    <property type="protein sequence ID" value="ENSP00000406614.1"/>
    <property type="gene ID" value="ENSG00000228892.9"/>
</dbReference>
<dbReference type="Ensembl" id="ENST00000452427.6">
    <property type="protein sequence ID" value="ENSP00000387738.2"/>
    <property type="gene ID" value="ENSG00000235758.9"/>
</dbReference>
<dbReference type="Ensembl" id="ENST00000454929.5">
    <property type="protein sequence ID" value="ENSP00000390988.1"/>
    <property type="gene ID" value="ENSG00000227642.9"/>
</dbReference>
<dbReference type="Ensembl" id="ENST00000455898.5">
    <property type="protein sequence ID" value="ENSP00000395613.1"/>
    <property type="gene ID" value="ENSG00000228892.9"/>
</dbReference>
<dbReference type="Ensembl" id="ENST00000456421.5">
    <property type="protein sequence ID" value="ENSP00000389516.1"/>
    <property type="gene ID" value="ENSG00000227642.9"/>
</dbReference>
<dbReference type="Ensembl" id="ENST00000456679.2">
    <property type="protein sequence ID" value="ENSP00000388815.2"/>
    <property type="gene ID" value="ENSG00000227642.9"/>
</dbReference>
<dbReference type="Ensembl" id="ENST00000457923.5">
    <property type="protein sequence ID" value="ENSP00000405565.1"/>
    <property type="gene ID" value="ENSG00000226467.9"/>
</dbReference>
<dbReference type="GeneID" id="10554"/>
<dbReference type="KEGG" id="hsa:10554"/>
<dbReference type="MANE-Select" id="ENST00000375107.8">
    <property type="protein sequence ID" value="ENSP00000364248.3"/>
    <property type="RefSeq nucleotide sequence ID" value="NM_006411.4"/>
    <property type="RefSeq protein sequence ID" value="NP_006402.1"/>
</dbReference>
<dbReference type="UCSC" id="uc003oae.4">
    <property type="organism name" value="human"/>
</dbReference>
<dbReference type="AGR" id="HGNC:324"/>
<dbReference type="CTD" id="10554"/>
<dbReference type="DisGeNET" id="10554"/>
<dbReference type="GeneCards" id="AGPAT1"/>
<dbReference type="HGNC" id="HGNC:324">
    <property type="gene designation" value="AGPAT1"/>
</dbReference>
<dbReference type="HPA" id="ENSG00000204310">
    <property type="expression patterns" value="Low tissue specificity"/>
</dbReference>
<dbReference type="MIM" id="603099">
    <property type="type" value="gene"/>
</dbReference>
<dbReference type="neXtProt" id="NX_Q99943"/>
<dbReference type="OpenTargets" id="ENSG00000204310"/>
<dbReference type="PharmGKB" id="PA24621"/>
<dbReference type="VEuPathDB" id="HostDB:ENSG00000204310"/>
<dbReference type="eggNOG" id="KOG2848">
    <property type="taxonomic scope" value="Eukaryota"/>
</dbReference>
<dbReference type="GeneTree" id="ENSGT00390000008726"/>
<dbReference type="HOGENOM" id="CLU_027938_10_1_1"/>
<dbReference type="InParanoid" id="Q99943"/>
<dbReference type="OMA" id="KKSLVWI"/>
<dbReference type="OrthoDB" id="202234at2759"/>
<dbReference type="PAN-GO" id="Q99943">
    <property type="GO annotations" value="3 GO annotations based on evolutionary models"/>
</dbReference>
<dbReference type="PhylomeDB" id="Q99943"/>
<dbReference type="TreeFam" id="TF314867"/>
<dbReference type="BioCyc" id="MetaCyc:HS09762-MONOMER"/>
<dbReference type="BRENDA" id="2.3.1.51">
    <property type="organism ID" value="2681"/>
</dbReference>
<dbReference type="PathwayCommons" id="Q99943"/>
<dbReference type="Reactome" id="R-HSA-1483166">
    <property type="pathway name" value="Synthesis of PA"/>
</dbReference>
<dbReference type="Reactome" id="R-HSA-163765">
    <property type="pathway name" value="ChREBP activates metabolic gene expression"/>
</dbReference>
<dbReference type="SignaLink" id="Q99943"/>
<dbReference type="UniPathway" id="UPA00557">
    <property type="reaction ID" value="UER00613"/>
</dbReference>
<dbReference type="BioGRID-ORCS" id="10554">
    <property type="hits" value="41 hits in 1164 CRISPR screens"/>
</dbReference>
<dbReference type="ChiTaRS" id="AGPAT1">
    <property type="organism name" value="human"/>
</dbReference>
<dbReference type="GeneWiki" id="AGPAT1"/>
<dbReference type="GenomeRNAi" id="10554"/>
<dbReference type="Pharos" id="Q99943">
    <property type="development level" value="Tbio"/>
</dbReference>
<dbReference type="PRO" id="PR:Q99943"/>
<dbReference type="Proteomes" id="UP000005640">
    <property type="component" value="Chromosome 6"/>
</dbReference>
<dbReference type="RNAct" id="Q99943">
    <property type="molecule type" value="protein"/>
</dbReference>
<dbReference type="Bgee" id="ENSG00000204310">
    <property type="expression patterns" value="Expressed in right frontal lobe and 97 other cell types or tissues"/>
</dbReference>
<dbReference type="ExpressionAtlas" id="Q99943">
    <property type="expression patterns" value="baseline and differential"/>
</dbReference>
<dbReference type="GO" id="GO:0005783">
    <property type="term" value="C:endoplasmic reticulum"/>
    <property type="evidence" value="ECO:0000314"/>
    <property type="project" value="UniProtKB"/>
</dbReference>
<dbReference type="GO" id="GO:0005789">
    <property type="term" value="C:endoplasmic reticulum membrane"/>
    <property type="evidence" value="ECO:0000304"/>
    <property type="project" value="Reactome"/>
</dbReference>
<dbReference type="GO" id="GO:0016020">
    <property type="term" value="C:membrane"/>
    <property type="evidence" value="ECO:0007005"/>
    <property type="project" value="UniProtKB"/>
</dbReference>
<dbReference type="GO" id="GO:0003841">
    <property type="term" value="F:1-acylglycerol-3-phosphate O-acyltransferase activity"/>
    <property type="evidence" value="ECO:0000314"/>
    <property type="project" value="UniProtKB"/>
</dbReference>
<dbReference type="GO" id="GO:0016024">
    <property type="term" value="P:CDP-diacylglycerol biosynthetic process"/>
    <property type="evidence" value="ECO:0007669"/>
    <property type="project" value="UniProtKB-UniPathway"/>
</dbReference>
<dbReference type="GO" id="GO:0006654">
    <property type="term" value="P:phosphatidic acid biosynthetic process"/>
    <property type="evidence" value="ECO:0000316"/>
    <property type="project" value="BHF-UCL"/>
</dbReference>
<dbReference type="GO" id="GO:0006644">
    <property type="term" value="P:phospholipid metabolic process"/>
    <property type="evidence" value="ECO:0000304"/>
    <property type="project" value="ProtInc"/>
</dbReference>
<dbReference type="GO" id="GO:0001819">
    <property type="term" value="P:positive regulation of cytokine production"/>
    <property type="evidence" value="ECO:0000315"/>
    <property type="project" value="BHF-UCL"/>
</dbReference>
<dbReference type="GO" id="GO:0001961">
    <property type="term" value="P:positive regulation of cytokine-mediated signaling pathway"/>
    <property type="evidence" value="ECO:0000305"/>
    <property type="project" value="BHF-UCL"/>
</dbReference>
<dbReference type="CDD" id="cd07989">
    <property type="entry name" value="LPLAT_AGPAT-like"/>
    <property type="match status" value="1"/>
</dbReference>
<dbReference type="InterPro" id="IPR004552">
    <property type="entry name" value="AGP_acyltrans"/>
</dbReference>
<dbReference type="InterPro" id="IPR002123">
    <property type="entry name" value="Plipid/glycerol_acylTrfase"/>
</dbReference>
<dbReference type="NCBIfam" id="TIGR00530">
    <property type="entry name" value="AGP_acyltrn"/>
    <property type="match status" value="1"/>
</dbReference>
<dbReference type="PANTHER" id="PTHR10434">
    <property type="entry name" value="1-ACYL-SN-GLYCEROL-3-PHOSPHATE ACYLTRANSFERASE"/>
    <property type="match status" value="1"/>
</dbReference>
<dbReference type="PANTHER" id="PTHR10434:SF65">
    <property type="entry name" value="1-ACYL-SN-GLYCEROL-3-PHOSPHATE ACYLTRANSFERASE ALPHA"/>
    <property type="match status" value="1"/>
</dbReference>
<dbReference type="Pfam" id="PF01553">
    <property type="entry name" value="Acyltransferase"/>
    <property type="match status" value="1"/>
</dbReference>
<dbReference type="SMART" id="SM00563">
    <property type="entry name" value="PlsC"/>
    <property type="match status" value="1"/>
</dbReference>
<dbReference type="SUPFAM" id="SSF69593">
    <property type="entry name" value="Glycerol-3-phosphate (1)-acyltransferase"/>
    <property type="match status" value="1"/>
</dbReference>
<name>PLCA_HUMAN</name>
<reference key="1">
    <citation type="journal article" date="1997" name="DNA Cell Biol.">
        <title>Cloning and expression of two human lysophosphatidic acid acyltransferase cDNAs that enhance cytokine-induced signaling responses in cells.</title>
        <authorList>
            <person name="West J."/>
            <person name="Tompkins C.K."/>
            <person name="Balantac N."/>
            <person name="Nudelman E."/>
            <person name="Meengs B."/>
            <person name="White T."/>
            <person name="Bursten S."/>
            <person name="Coleman J."/>
            <person name="Kumar A."/>
            <person name="Singer J.W."/>
            <person name="Leung D.W."/>
        </authorList>
    </citation>
    <scope>NUCLEOTIDE SEQUENCE [MRNA]</scope>
</reference>
<reference key="2">
    <citation type="journal article" date="1997" name="Biochem. J.">
        <title>A human cDNA sequence with homology to non-mammalian lysophosphatidic acid acyltransferases.</title>
        <authorList>
            <person name="Stamps A.C."/>
            <person name="Elmore M.A."/>
            <person name="Hill M.E."/>
            <person name="Kelly K."/>
            <person name="Makda A.A."/>
            <person name="Finnen M.J."/>
        </authorList>
    </citation>
    <scope>NUCLEOTIDE SEQUENCE [MRNA]</scope>
</reference>
<reference key="3">
    <citation type="journal article" date="1998" name="J. Biol. Chem.">
        <title>Characterization of a human lysophosphatidic acid acyltransferase that is encoded by a gene located in the class III region of the human major histocompatibility complex.</title>
        <authorList>
            <person name="Aguado B."/>
            <person name="Campbell R.D."/>
        </authorList>
    </citation>
    <scope>NUCLEOTIDE SEQUENCE [MRNA]</scope>
    <scope>FUNCTION</scope>
    <scope>CATALYTIC ACTIVITY</scope>
    <scope>SUBCELLULAR LOCATION</scope>
    <scope>TOPOLOGY</scope>
</reference>
<reference key="4">
    <citation type="journal article" date="2003" name="Genome Res.">
        <title>Analysis of the gene-dense major histocompatibility complex class III region and its comparison to mouse.</title>
        <authorList>
            <person name="Xie T."/>
            <person name="Rowen L."/>
            <person name="Aguado B."/>
            <person name="Ahearn M.E."/>
            <person name="Madan A."/>
            <person name="Qin S."/>
            <person name="Campbell R.D."/>
            <person name="Hood L."/>
        </authorList>
    </citation>
    <scope>NUCLEOTIDE SEQUENCE [LARGE SCALE GENOMIC DNA]</scope>
</reference>
<reference key="5">
    <citation type="submission" date="2005-07" db="EMBL/GenBank/DDBJ databases">
        <authorList>
            <person name="Mural R.J."/>
            <person name="Istrail S."/>
            <person name="Sutton G.G."/>
            <person name="Florea L."/>
            <person name="Halpern A.L."/>
            <person name="Mobarry C.M."/>
            <person name="Lippert R."/>
            <person name="Walenz B."/>
            <person name="Shatkay H."/>
            <person name="Dew I."/>
            <person name="Miller J.R."/>
            <person name="Flanigan M.J."/>
            <person name="Edwards N.J."/>
            <person name="Bolanos R."/>
            <person name="Fasulo D."/>
            <person name="Halldorsson B.V."/>
            <person name="Hannenhalli S."/>
            <person name="Turner R."/>
            <person name="Yooseph S."/>
            <person name="Lu F."/>
            <person name="Nusskern D.R."/>
            <person name="Shue B.C."/>
            <person name="Zheng X.H."/>
            <person name="Zhong F."/>
            <person name="Delcher A.L."/>
            <person name="Huson D.H."/>
            <person name="Kravitz S.A."/>
            <person name="Mouchard L."/>
            <person name="Reinert K."/>
            <person name="Remington K.A."/>
            <person name="Clark A.G."/>
            <person name="Waterman M.S."/>
            <person name="Eichler E.E."/>
            <person name="Adams M.D."/>
            <person name="Hunkapiller M.W."/>
            <person name="Myers E.W."/>
            <person name="Venter J.C."/>
        </authorList>
    </citation>
    <scope>NUCLEOTIDE SEQUENCE [LARGE SCALE GENOMIC DNA]</scope>
</reference>
<reference key="6">
    <citation type="journal article" date="2003" name="Nature">
        <title>The DNA sequence and analysis of human chromosome 6.</title>
        <authorList>
            <person name="Mungall A.J."/>
            <person name="Palmer S.A."/>
            <person name="Sims S.K."/>
            <person name="Edwards C.A."/>
            <person name="Ashurst J.L."/>
            <person name="Wilming L."/>
            <person name="Jones M.C."/>
            <person name="Horton R."/>
            <person name="Hunt S.E."/>
            <person name="Scott C.E."/>
            <person name="Gilbert J.G.R."/>
            <person name="Clamp M.E."/>
            <person name="Bethel G."/>
            <person name="Milne S."/>
            <person name="Ainscough R."/>
            <person name="Almeida J.P."/>
            <person name="Ambrose K.D."/>
            <person name="Andrews T.D."/>
            <person name="Ashwell R.I.S."/>
            <person name="Babbage A.K."/>
            <person name="Bagguley C.L."/>
            <person name="Bailey J."/>
            <person name="Banerjee R."/>
            <person name="Barker D.J."/>
            <person name="Barlow K.F."/>
            <person name="Bates K."/>
            <person name="Beare D.M."/>
            <person name="Beasley H."/>
            <person name="Beasley O."/>
            <person name="Bird C.P."/>
            <person name="Blakey S.E."/>
            <person name="Bray-Allen S."/>
            <person name="Brook J."/>
            <person name="Brown A.J."/>
            <person name="Brown J.Y."/>
            <person name="Burford D.C."/>
            <person name="Burrill W."/>
            <person name="Burton J."/>
            <person name="Carder C."/>
            <person name="Carter N.P."/>
            <person name="Chapman J.C."/>
            <person name="Clark S.Y."/>
            <person name="Clark G."/>
            <person name="Clee C.M."/>
            <person name="Clegg S."/>
            <person name="Cobley V."/>
            <person name="Collier R.E."/>
            <person name="Collins J.E."/>
            <person name="Colman L.K."/>
            <person name="Corby N.R."/>
            <person name="Coville G.J."/>
            <person name="Culley K.M."/>
            <person name="Dhami P."/>
            <person name="Davies J."/>
            <person name="Dunn M."/>
            <person name="Earthrowl M.E."/>
            <person name="Ellington A.E."/>
            <person name="Evans K.A."/>
            <person name="Faulkner L."/>
            <person name="Francis M.D."/>
            <person name="Frankish A."/>
            <person name="Frankland J."/>
            <person name="French L."/>
            <person name="Garner P."/>
            <person name="Garnett J."/>
            <person name="Ghori M.J."/>
            <person name="Gilby L.M."/>
            <person name="Gillson C.J."/>
            <person name="Glithero R.J."/>
            <person name="Grafham D.V."/>
            <person name="Grant M."/>
            <person name="Gribble S."/>
            <person name="Griffiths C."/>
            <person name="Griffiths M.N.D."/>
            <person name="Hall R."/>
            <person name="Halls K.S."/>
            <person name="Hammond S."/>
            <person name="Harley J.L."/>
            <person name="Hart E.A."/>
            <person name="Heath P.D."/>
            <person name="Heathcott R."/>
            <person name="Holmes S.J."/>
            <person name="Howden P.J."/>
            <person name="Howe K.L."/>
            <person name="Howell G.R."/>
            <person name="Huckle E."/>
            <person name="Humphray S.J."/>
            <person name="Humphries M.D."/>
            <person name="Hunt A.R."/>
            <person name="Johnson C.M."/>
            <person name="Joy A.A."/>
            <person name="Kay M."/>
            <person name="Keenan S.J."/>
            <person name="Kimberley A.M."/>
            <person name="King A."/>
            <person name="Laird G.K."/>
            <person name="Langford C."/>
            <person name="Lawlor S."/>
            <person name="Leongamornlert D.A."/>
            <person name="Leversha M."/>
            <person name="Lloyd C.R."/>
            <person name="Lloyd D.M."/>
            <person name="Loveland J.E."/>
            <person name="Lovell J."/>
            <person name="Martin S."/>
            <person name="Mashreghi-Mohammadi M."/>
            <person name="Maslen G.L."/>
            <person name="Matthews L."/>
            <person name="McCann O.T."/>
            <person name="McLaren S.J."/>
            <person name="McLay K."/>
            <person name="McMurray A."/>
            <person name="Moore M.J.F."/>
            <person name="Mullikin J.C."/>
            <person name="Niblett D."/>
            <person name="Nickerson T."/>
            <person name="Novik K.L."/>
            <person name="Oliver K."/>
            <person name="Overton-Larty E.K."/>
            <person name="Parker A."/>
            <person name="Patel R."/>
            <person name="Pearce A.V."/>
            <person name="Peck A.I."/>
            <person name="Phillimore B.J.C.T."/>
            <person name="Phillips S."/>
            <person name="Plumb R.W."/>
            <person name="Porter K.M."/>
            <person name="Ramsey Y."/>
            <person name="Ranby S.A."/>
            <person name="Rice C.M."/>
            <person name="Ross M.T."/>
            <person name="Searle S.M."/>
            <person name="Sehra H.K."/>
            <person name="Sheridan E."/>
            <person name="Skuce C.D."/>
            <person name="Smith S."/>
            <person name="Smith M."/>
            <person name="Spraggon L."/>
            <person name="Squares S.L."/>
            <person name="Steward C.A."/>
            <person name="Sycamore N."/>
            <person name="Tamlyn-Hall G."/>
            <person name="Tester J."/>
            <person name="Theaker A.J."/>
            <person name="Thomas D.W."/>
            <person name="Thorpe A."/>
            <person name="Tracey A."/>
            <person name="Tromans A."/>
            <person name="Tubby B."/>
            <person name="Wall M."/>
            <person name="Wallis J.M."/>
            <person name="West A.P."/>
            <person name="White S.S."/>
            <person name="Whitehead S.L."/>
            <person name="Whittaker H."/>
            <person name="Wild A."/>
            <person name="Willey D.J."/>
            <person name="Wilmer T.E."/>
            <person name="Wood J.M."/>
            <person name="Wray P.W."/>
            <person name="Wyatt J.C."/>
            <person name="Young L."/>
            <person name="Younger R.M."/>
            <person name="Bentley D.R."/>
            <person name="Coulson A."/>
            <person name="Durbin R.M."/>
            <person name="Hubbard T."/>
            <person name="Sulston J.E."/>
            <person name="Dunham I."/>
            <person name="Rogers J."/>
            <person name="Beck S."/>
        </authorList>
    </citation>
    <scope>NUCLEOTIDE SEQUENCE [LARGE SCALE GENOMIC DNA]</scope>
</reference>
<reference key="7">
    <citation type="journal article" date="2004" name="Genome Res.">
        <title>The status, quality, and expansion of the NIH full-length cDNA project: the Mammalian Gene Collection (MGC).</title>
        <authorList>
            <consortium name="The MGC Project Team"/>
        </authorList>
    </citation>
    <scope>NUCLEOTIDE SEQUENCE [LARGE SCALE MRNA]</scope>
    <source>
        <tissue>Brain</tissue>
        <tissue>Lung</tissue>
        <tissue>Skin</tissue>
    </source>
</reference>
<reference key="8">
    <citation type="journal article" date="2011" name="J. Biol. Chem.">
        <title>Human 1-acylglycerol-3-phosphate O-acyltransferase isoforms 1 and 2: biochemical characterization and inability to rescue hepatic steatosis in Agpat2(-/-) gene lipodystrophic mice.</title>
        <authorList>
            <person name="Agarwal A.K."/>
            <person name="Sukumaran S."/>
            <person name="Cortes V.A."/>
            <person name="Tunison K."/>
            <person name="Mizrachi D."/>
            <person name="Sankella S."/>
            <person name="Gerard R.D."/>
            <person name="Horton J.D."/>
            <person name="Garg A."/>
        </authorList>
    </citation>
    <scope>FUNCTION</scope>
    <scope>CATALYTIC ACTIVITY</scope>
    <scope>SUBCELLULAR LOCATION</scope>
    <scope>TISSUE SPECIFICITY</scope>
    <scope>BIOPHYSICOCHEMICAL PROPERTIES</scope>
    <scope>MOTIF EGTR</scope>
</reference>
<proteinExistence type="evidence at protein level"/>
<keyword id="KW-0012">Acyltransferase</keyword>
<keyword id="KW-0256">Endoplasmic reticulum</keyword>
<keyword id="KW-0444">Lipid biosynthesis</keyword>
<keyword id="KW-0443">Lipid metabolism</keyword>
<keyword id="KW-0472">Membrane</keyword>
<keyword id="KW-0594">Phospholipid biosynthesis</keyword>
<keyword id="KW-1208">Phospholipid metabolism</keyword>
<keyword id="KW-1267">Proteomics identification</keyword>
<keyword id="KW-1185">Reference proteome</keyword>
<keyword id="KW-0732">Signal</keyword>
<keyword id="KW-0808">Transferase</keyword>
<keyword id="KW-0812">Transmembrane</keyword>
<keyword id="KW-1133">Transmembrane helix</keyword>
<protein>
    <recommendedName>
        <fullName>1-acyl-sn-glycerol-3-phosphate acyltransferase alpha</fullName>
        <ecNumber evidence="3 4">2.3.1.51</ecNumber>
    </recommendedName>
    <alternativeName>
        <fullName>1-acylglycerol-3-phosphate O-acyltransferase 1</fullName>
        <shortName>1-AGP acyltransferase 1</shortName>
        <shortName>1-AGPAT 1</shortName>
    </alternativeName>
    <alternativeName>
        <fullName evidence="5">Lysophosphatidic acid acyltransferase alpha</fullName>
        <shortName>LPAAT-alpha</shortName>
    </alternativeName>
    <alternativeName>
        <fullName>Protein G15</fullName>
    </alternativeName>
</protein>
<comment type="function">
    <text evidence="3 4">Converts 1-acyl-sn-glycerol-3-phosphate (lysophosphatidic acid or LPA) into 1,2-diacyl-sn-glycerol-3-phosphate (phosphatidic acid or PA) by incorporating an acyl moiety at the sn-2 position of the glycerol backbone.</text>
</comment>
<comment type="catalytic activity">
    <reaction evidence="3 4">
        <text>a 1-acyl-sn-glycero-3-phosphate + an acyl-CoA = a 1,2-diacyl-sn-glycero-3-phosphate + CoA</text>
        <dbReference type="Rhea" id="RHEA:19709"/>
        <dbReference type="ChEBI" id="CHEBI:57287"/>
        <dbReference type="ChEBI" id="CHEBI:57970"/>
        <dbReference type="ChEBI" id="CHEBI:58342"/>
        <dbReference type="ChEBI" id="CHEBI:58608"/>
        <dbReference type="EC" id="2.3.1.51"/>
    </reaction>
    <physiologicalReaction direction="left-to-right" evidence="7 8">
        <dbReference type="Rhea" id="RHEA:19710"/>
    </physiologicalReaction>
</comment>
<comment type="catalytic activity">
    <reaction evidence="3 4">
        <text>1-(9Z-octadecenoyl)-sn-glycero-3-phosphate + (9Z)-octadecenoyl-CoA = 1,2-di-(9Z-octadecenoyl)-sn-glycero-3-phosphate + CoA</text>
        <dbReference type="Rhea" id="RHEA:37131"/>
        <dbReference type="ChEBI" id="CHEBI:57287"/>
        <dbReference type="ChEBI" id="CHEBI:57387"/>
        <dbReference type="ChEBI" id="CHEBI:74544"/>
        <dbReference type="ChEBI" id="CHEBI:74546"/>
    </reaction>
    <physiologicalReaction direction="left-to-right" evidence="7 8">
        <dbReference type="Rhea" id="RHEA:37132"/>
    </physiologicalReaction>
</comment>
<comment type="catalytic activity">
    <reaction evidence="3 4">
        <text>1-(9Z-octadecenoyl)-sn-glycero-3-phosphate + hexadecanoyl-CoA = 1-(9Z)-octadecenoyl-2-hexadecanoyl-sn-glycero-3-phosphate + CoA</text>
        <dbReference type="Rhea" id="RHEA:37143"/>
        <dbReference type="ChEBI" id="CHEBI:57287"/>
        <dbReference type="ChEBI" id="CHEBI:57379"/>
        <dbReference type="ChEBI" id="CHEBI:74544"/>
        <dbReference type="ChEBI" id="CHEBI:74551"/>
    </reaction>
    <physiologicalReaction direction="left-to-right" evidence="7 8">
        <dbReference type="Rhea" id="RHEA:37144"/>
    </physiologicalReaction>
</comment>
<comment type="catalytic activity">
    <reaction evidence="3">
        <text>heptadecanoyl-CoA + 1-(9Z-octadecenoyl)-sn-glycero-3-phosphate = 1-(9Z)-octadecenoyl-2-heptadecanoyl-sn-glycero-3-phosphate + CoA</text>
        <dbReference type="Rhea" id="RHEA:37155"/>
        <dbReference type="ChEBI" id="CHEBI:57287"/>
        <dbReference type="ChEBI" id="CHEBI:74307"/>
        <dbReference type="ChEBI" id="CHEBI:74544"/>
        <dbReference type="ChEBI" id="CHEBI:74558"/>
    </reaction>
    <physiologicalReaction direction="left-to-right" evidence="7">
        <dbReference type="Rhea" id="RHEA:37156"/>
    </physiologicalReaction>
</comment>
<comment type="catalytic activity">
    <reaction evidence="3 4">
        <text>1-(9Z-octadecenoyl)-sn-glycero-3-phosphate + octadecanoyl-CoA = 1-(9Z-octadecenoyl)-2-octadecanoyl-sn-glycero-3-phosphate + CoA</text>
        <dbReference type="Rhea" id="RHEA:37147"/>
        <dbReference type="ChEBI" id="CHEBI:57287"/>
        <dbReference type="ChEBI" id="CHEBI:57394"/>
        <dbReference type="ChEBI" id="CHEBI:74544"/>
        <dbReference type="ChEBI" id="CHEBI:74552"/>
    </reaction>
    <physiologicalReaction direction="left-to-right" evidence="7 8">
        <dbReference type="Rhea" id="RHEA:37148"/>
    </physiologicalReaction>
</comment>
<comment type="catalytic activity">
    <reaction evidence="3 4">
        <text>1-(9Z-octadecenoyl)-sn-glycero-3-phosphate + (9Z,12Z)-octadecadienoyl-CoA = 1-(9Z)-octadecenoyl-2-(9Z,12Z)-octadecadienoyl-sn-glycero-3-phosphate + CoA</text>
        <dbReference type="Rhea" id="RHEA:37159"/>
        <dbReference type="ChEBI" id="CHEBI:57287"/>
        <dbReference type="ChEBI" id="CHEBI:57383"/>
        <dbReference type="ChEBI" id="CHEBI:74544"/>
        <dbReference type="ChEBI" id="CHEBI:74563"/>
    </reaction>
    <physiologicalReaction direction="left-to-right" evidence="7 8">
        <dbReference type="Rhea" id="RHEA:37160"/>
    </physiologicalReaction>
</comment>
<comment type="catalytic activity">
    <reaction evidence="3 4">
        <text>1-(9Z-octadecenoyl)-sn-glycero-3-phosphate + tetradecanoyl-CoA = 1-(9Z)-octadecenoyl-2-tetradecanoyl-sn-glycero-3-phosphate + CoA</text>
        <dbReference type="Rhea" id="RHEA:37171"/>
        <dbReference type="ChEBI" id="CHEBI:57287"/>
        <dbReference type="ChEBI" id="CHEBI:57385"/>
        <dbReference type="ChEBI" id="CHEBI:74544"/>
        <dbReference type="ChEBI" id="CHEBI:74579"/>
    </reaction>
    <physiologicalReaction direction="left-to-right" evidence="7 8">
        <dbReference type="Rhea" id="RHEA:37172"/>
    </physiologicalReaction>
</comment>
<comment type="catalytic activity">
    <reaction evidence="3">
        <text>pentadecanoyl-CoA + 1-(9Z-octadecenoyl)-sn-glycero-3-phosphate = 1-(9Z)-octadecenoyl-2-pentadecanoyl-sn-glycero-3-phosphate + CoA</text>
        <dbReference type="Rhea" id="RHEA:37175"/>
        <dbReference type="ChEBI" id="CHEBI:57287"/>
        <dbReference type="ChEBI" id="CHEBI:74309"/>
        <dbReference type="ChEBI" id="CHEBI:74544"/>
        <dbReference type="ChEBI" id="CHEBI:74578"/>
    </reaction>
    <physiologicalReaction direction="left-to-right" evidence="7">
        <dbReference type="Rhea" id="RHEA:37176"/>
    </physiologicalReaction>
</comment>
<comment type="catalytic activity">
    <reaction evidence="3">
        <text>1-hexadecanoyl-sn-glycero-3-phosphate + (9Z)-octadecenoyl-CoA = 1-hexadecanoyl-2-(9Z-octadecenoyl)-sn-glycero-3-phosphate + CoA</text>
        <dbReference type="Rhea" id="RHEA:33187"/>
        <dbReference type="ChEBI" id="CHEBI:57287"/>
        <dbReference type="ChEBI" id="CHEBI:57387"/>
        <dbReference type="ChEBI" id="CHEBI:57518"/>
        <dbReference type="ChEBI" id="CHEBI:64839"/>
    </reaction>
    <physiologicalReaction direction="left-to-right" evidence="7">
        <dbReference type="Rhea" id="RHEA:33188"/>
    </physiologicalReaction>
</comment>
<comment type="catalytic activity">
    <reaction evidence="3">
        <text>1-(9Z,12Z,15Z)-octadecatrienoyl-sn-glycero-3-phosphate + (9Z)-octadecenoyl-CoA = 1-(9Z,12Z,15Z)-octadecatrienoyl-2-(9Z)-octadecenoyl-sn-glycero-3-phosphate + CoA</text>
        <dbReference type="Rhea" id="RHEA:37139"/>
        <dbReference type="ChEBI" id="CHEBI:57287"/>
        <dbReference type="ChEBI" id="CHEBI:57387"/>
        <dbReference type="ChEBI" id="CHEBI:74549"/>
        <dbReference type="ChEBI" id="CHEBI:74550"/>
    </reaction>
    <physiologicalReaction direction="left-to-right" evidence="7">
        <dbReference type="Rhea" id="RHEA:37140"/>
    </physiologicalReaction>
</comment>
<comment type="catalytic activity">
    <reaction evidence="3">
        <text>1-(6Z,9Z,12Z-octadecatrienoyl)-sn-glycero-3-phosphate + (9Z)-octadecenoyl-CoA = (6Z,9Z,12Z)-octadecatrienoyl-2-(9Z)-octadecenoyl-sn-glycero-3-phosphate + CoA</text>
        <dbReference type="Rhea" id="RHEA:37179"/>
        <dbReference type="ChEBI" id="CHEBI:57287"/>
        <dbReference type="ChEBI" id="CHEBI:57387"/>
        <dbReference type="ChEBI" id="CHEBI:74581"/>
        <dbReference type="ChEBI" id="CHEBI:74582"/>
    </reaction>
    <physiologicalReaction direction="left-to-right" evidence="7">
        <dbReference type="Rhea" id="RHEA:37180"/>
    </physiologicalReaction>
</comment>
<comment type="catalytic activity">
    <reaction evidence="3">
        <text>1-eicosanoyl-sn-glycero-3-phosphate + (9Z)-octadecenoyl-CoA = 1-eicosanoyl-2-(9Z)-octadecenoyl-sn-glycero-3-phosphate + CoA</text>
        <dbReference type="Rhea" id="RHEA:37183"/>
        <dbReference type="ChEBI" id="CHEBI:57287"/>
        <dbReference type="ChEBI" id="CHEBI:57387"/>
        <dbReference type="ChEBI" id="CHEBI:74583"/>
        <dbReference type="ChEBI" id="CHEBI:74584"/>
    </reaction>
    <physiologicalReaction direction="left-to-right" evidence="7">
        <dbReference type="Rhea" id="RHEA:37184"/>
    </physiologicalReaction>
</comment>
<comment type="catalytic activity">
    <reaction evidence="3">
        <text>1-tetradecanoyl-sn-glycerol 3-phosphate + (9Z)-octadecenoyl-CoA = 1-tetradecanoyl-2-(9Z)-octadecenoyl-sn-glycero-3-phosphate + CoA</text>
        <dbReference type="Rhea" id="RHEA:37187"/>
        <dbReference type="ChEBI" id="CHEBI:57287"/>
        <dbReference type="ChEBI" id="CHEBI:57387"/>
        <dbReference type="ChEBI" id="CHEBI:72683"/>
        <dbReference type="ChEBI" id="CHEBI:74586"/>
    </reaction>
    <physiologicalReaction direction="left-to-right" evidence="7">
        <dbReference type="Rhea" id="RHEA:37188"/>
    </physiologicalReaction>
</comment>
<comment type="catalytic activity">
    <reaction evidence="4">
        <text>1-(9Z-octadecenoyl)-sn-glycero-3-phosphate + (5Z,8Z,11Z,14Z)-eicosatetraenoyl-CoA = 1-(9Z)-octadecenoyl-2-(5Z,8Z,11Z,14Z)-eicosatetraenoyl-sn-glycero-3-phosphate + CoA</text>
        <dbReference type="Rhea" id="RHEA:37443"/>
        <dbReference type="ChEBI" id="CHEBI:57287"/>
        <dbReference type="ChEBI" id="CHEBI:57368"/>
        <dbReference type="ChEBI" id="CHEBI:74544"/>
        <dbReference type="ChEBI" id="CHEBI:74928"/>
    </reaction>
    <physiologicalReaction direction="left-to-right" evidence="8">
        <dbReference type="Rhea" id="RHEA:37444"/>
    </physiologicalReaction>
</comment>
<comment type="catalytic activity">
    <reaction evidence="4">
        <text>1-(9Z-octadecenoyl)-sn-glycero-3-phosphate + dodecanoyl-CoA = 1-(9Z)-octadecenoyl-2-dodecanoyl-sn-glycero-3-phosphate + CoA</text>
        <dbReference type="Rhea" id="RHEA:37591"/>
        <dbReference type="ChEBI" id="CHEBI:57287"/>
        <dbReference type="ChEBI" id="CHEBI:57375"/>
        <dbReference type="ChEBI" id="CHEBI:74544"/>
        <dbReference type="ChEBI" id="CHEBI:75076"/>
    </reaction>
    <physiologicalReaction direction="left-to-right" evidence="8">
        <dbReference type="Rhea" id="RHEA:37592"/>
    </physiologicalReaction>
</comment>
<comment type="catalytic activity">
    <reaction evidence="3">
        <text>(6Z)-octadecenoyl-CoA + 1-(9Z-octadecenoyl)-sn-glycero-3-phosphate = 1-(9Z)-octadecenoyl-2-(6Z)-octadecenoyl-sn-glycero-3-phosphate + CoA</text>
        <dbReference type="Rhea" id="RHEA:37607"/>
        <dbReference type="ChEBI" id="CHEBI:57287"/>
        <dbReference type="ChEBI" id="CHEBI:74544"/>
        <dbReference type="ChEBI" id="CHEBI:75123"/>
        <dbReference type="ChEBI" id="CHEBI:75124"/>
    </reaction>
    <physiologicalReaction direction="left-to-right" evidence="7">
        <dbReference type="Rhea" id="RHEA:37608"/>
    </physiologicalReaction>
</comment>
<comment type="catalytic activity">
    <reaction evidence="3">
        <text>(11Z)-octadecenoyl-CoA + 1-(9Z-octadecenoyl)-sn-glycero-3-phosphate = 1-(9Z)-octadecenoyl-2-(11Z)-octadecenoyl-sn-glycero-3-phosphate + CoA</text>
        <dbReference type="Rhea" id="RHEA:37603"/>
        <dbReference type="ChEBI" id="CHEBI:57287"/>
        <dbReference type="ChEBI" id="CHEBI:74544"/>
        <dbReference type="ChEBI" id="CHEBI:75121"/>
        <dbReference type="ChEBI" id="CHEBI:75122"/>
    </reaction>
    <physiologicalReaction direction="left-to-right" evidence="7">
        <dbReference type="Rhea" id="RHEA:37604"/>
    </physiologicalReaction>
</comment>
<comment type="catalytic activity">
    <reaction evidence="4">
        <text>(9Z)-hexadecenoyl-CoA + 1-(9Z-octadecenoyl)-sn-glycero-3-phosphate = 1-(9Z-octadecenoyl)-2-(9Z-hexadecenoyl)-sn-glycero-3-phosphate + CoA</text>
        <dbReference type="Rhea" id="RHEA:40195"/>
        <dbReference type="ChEBI" id="CHEBI:57287"/>
        <dbReference type="ChEBI" id="CHEBI:61540"/>
        <dbReference type="ChEBI" id="CHEBI:74544"/>
        <dbReference type="ChEBI" id="CHEBI:74697"/>
    </reaction>
    <physiologicalReaction direction="left-to-right" evidence="8">
        <dbReference type="Rhea" id="RHEA:40196"/>
    </physiologicalReaction>
</comment>
<comment type="biophysicochemical properties">
    <kinetics>
        <KM evidence="3">137.97 uM for C14:0-CoA</KM>
        <KM evidence="3">3.04 uM for C15:0-CoA</KM>
        <KM evidence="3">116.73 uM for C18:0-CoA</KM>
        <KM evidence="3">39.37 uM for C18:1-CoA</KM>
        <KM evidence="3">6 uM for LPA sn-1 C18:1</KM>
        <Vmax evidence="3">96.21 nmol/min/mg enzyme for C14:0-CoA</Vmax>
        <Vmax evidence="3">86.09 nmol/min/mg enzyme for C15:0-CoA</Vmax>
        <Vmax evidence="3">91.94 nmol/min/mg enzyme for C18:0-CoA</Vmax>
        <Vmax evidence="3">77.57 nmol/min/mg enzyme for C18:1-CoA</Vmax>
        <Vmax evidence="3">92.0 nmol/min/mg enzyme for LPA sn-1 C18:1</Vmax>
    </kinetics>
</comment>
<comment type="pathway">
    <text>Phospholipid metabolism; CDP-diacylglycerol biosynthesis; CDP-diacylglycerol from sn-glycerol 3-phosphate: step 2/3.</text>
</comment>
<comment type="interaction">
    <interactant intactId="EBI-3893468">
        <id>Q99943</id>
    </interactant>
    <interactant intactId="EBI-748397">
        <id>P50222</id>
        <label>MEOX2</label>
    </interactant>
    <organismsDiffer>false</organismsDiffer>
    <experiments>3</experiments>
</comment>
<comment type="interaction">
    <interactant intactId="EBI-3893468">
        <id>Q99943</id>
    </interactant>
    <interactant intactId="EBI-9027352">
        <id>O75792</id>
        <label>RNASEH2A</label>
    </interactant>
    <organismsDiffer>false</organismsDiffer>
    <experiments>2</experiments>
</comment>
<comment type="subcellular location">
    <subcellularLocation>
        <location evidence="3 4">Endoplasmic reticulum membrane</location>
        <topology evidence="2">Multi-pass membrane protein</topology>
    </subcellularLocation>
</comment>
<comment type="tissue specificity">
    <text evidence="3">Widely expressed. Expressed in adipose tissue and at high levels in testis and pancreas. Expressed at lower levels in tissues such as heart, brain, placenta, kidney, lung, spleen, thymus, prostate, ovary, intestine, colon, leukocyte and liver.</text>
</comment>
<comment type="domain">
    <text evidence="1">The HXXXXD motif is essential for acyltransferase activity and may constitute the binding site for the phosphate moiety of the glycerol-3-phosphate.</text>
</comment>
<comment type="similarity">
    <text evidence="6">Belongs to the 1-acyl-sn-glycerol-3-phosphate acyltransferase family.</text>
</comment>
<comment type="sequence caution" evidence="6">
    <conflict type="erroneous initiation">
        <sequence resource="EMBL-CDS" id="AAB47493"/>
    </conflict>
    <text>Truncated N-terminus.</text>
</comment>
<evidence type="ECO:0000250" key="1">
    <source>
        <dbReference type="UniProtKB" id="Q9D517"/>
    </source>
</evidence>
<evidence type="ECO:0000255" key="2"/>
<evidence type="ECO:0000269" key="3">
    <source>
    </source>
</evidence>
<evidence type="ECO:0000269" key="4">
    <source>
    </source>
</evidence>
<evidence type="ECO:0000303" key="5">
    <source>
    </source>
</evidence>
<evidence type="ECO:0000305" key="6"/>
<evidence type="ECO:0000305" key="7">
    <source>
    </source>
</evidence>
<evidence type="ECO:0000305" key="8">
    <source>
    </source>
</evidence>
<gene>
    <name type="primary">AGPAT1</name>
    <name type="synonym">G15</name>
</gene>
<sequence length="283" mass="31717">MDLWPGAWMLLLLLFLLLLFLLPTLWFCSPSAKYFFKMAFYNGWILFLAVLAIPVCAVRGRNVENMKILRLMLLHIKYLYGIRVEVRGAHHFPPSQPYVVVSNHQSSLDLLGMMEVLPGRCVPIAKRELLWAGSAGLACWLAGVIFIDRKRTGDAISVMSEVAQTLLTQDVRVWVFPEGTRNHNGSMLPFKRGAFHLAVQAQVPIVPIVMSSYQDFYCKKERRFTSGQCQVRVLPPVPTEGLTPDDVPALADRVRHSMLTVFREISTDGRGGGDYLKKPGGGG</sequence>